<keyword id="KW-0903">Direct protein sequencing</keyword>
<keyword id="KW-1015">Disulfide bond</keyword>
<keyword id="KW-0872">Ion channel impairing toxin</keyword>
<keyword id="KW-0528">Neurotoxin</keyword>
<keyword id="KW-0632">Potassium channel impairing toxin</keyword>
<keyword id="KW-0964">Secreted</keyword>
<keyword id="KW-0800">Toxin</keyword>
<keyword id="KW-1220">Voltage-gated potassium channel impairing toxin</keyword>
<organism>
    <name type="scientific">Parabuthus villosus</name>
    <name type="common">Black hairy thick-tailed scorpion</name>
    <dbReference type="NCBI Taxonomy" id="252780"/>
    <lineage>
        <taxon>Eukaryota</taxon>
        <taxon>Metazoa</taxon>
        <taxon>Ecdysozoa</taxon>
        <taxon>Arthropoda</taxon>
        <taxon>Chelicerata</taxon>
        <taxon>Arachnida</taxon>
        <taxon>Scorpiones</taxon>
        <taxon>Buthida</taxon>
        <taxon>Buthoidea</taxon>
        <taxon>Buthidae</taxon>
        <taxon>Parabuthus</taxon>
    </lineage>
</organism>
<dbReference type="SMR" id="P60165"/>
<dbReference type="GO" id="GO:0005576">
    <property type="term" value="C:extracellular region"/>
    <property type="evidence" value="ECO:0000314"/>
    <property type="project" value="UniProtKB"/>
</dbReference>
<dbReference type="GO" id="GO:0019870">
    <property type="term" value="F:potassium channel inhibitor activity"/>
    <property type="evidence" value="ECO:0000314"/>
    <property type="project" value="UniProtKB"/>
</dbReference>
<dbReference type="GO" id="GO:0090729">
    <property type="term" value="F:toxin activity"/>
    <property type="evidence" value="ECO:0000314"/>
    <property type="project" value="UniProtKB"/>
</dbReference>
<dbReference type="GO" id="GO:0044562">
    <property type="term" value="P:envenomation resulting in negative regulation of voltage-gated potassium channel activity in another organism"/>
    <property type="evidence" value="ECO:0000314"/>
    <property type="project" value="UniProtKB"/>
</dbReference>
<dbReference type="InterPro" id="IPR012635">
    <property type="entry name" value="Parabutoxin"/>
</dbReference>
<dbReference type="Pfam" id="PF08119">
    <property type="entry name" value="Toxin_31"/>
    <property type="match status" value="1"/>
</dbReference>
<sequence length="37" mass="4111">DEEPKETCSDEMCVIYCKGEEYSTGVCDGPQKCKCSD</sequence>
<accession>P60165</accession>
<feature type="peptide" id="PRO_0000044916" description="Potassium channel toxin alpha-KTx 11.2" evidence="2">
    <location>
        <begin position="1"/>
        <end position="37"/>
    </location>
</feature>
<feature type="disulfide bond" evidence="1">
    <location>
        <begin position="8"/>
        <end position="27"/>
    </location>
</feature>
<feature type="disulfide bond" evidence="1">
    <location>
        <begin position="13"/>
        <end position="33"/>
    </location>
</feature>
<feature type="disulfide bond" evidence="1">
    <location>
        <begin position="17"/>
        <end position="35"/>
    </location>
</feature>
<comment type="function">
    <text evidence="3">Binds and inhibits voltage-sensitive potassium channels. Inhibits the vertebrate potassium channel Kv1.1/KCNA1 with low affinity.</text>
</comment>
<comment type="subcellular location">
    <subcellularLocation>
        <location evidence="2">Secreted</location>
    </subcellularLocation>
</comment>
<comment type="tissue specificity">
    <text evidence="2">Expressed by the venom gland.</text>
</comment>
<comment type="domain">
    <text evidence="6">Has the structural arrangement of an alpha-helix connected to antiparallel beta-sheets by disulfide bonds (CS-alpha/beta).</text>
</comment>
<comment type="similarity">
    <text evidence="6">Belongs to the short scorpion toxin superfamily. Potassium channel inhibitor family. Alpha-KTx 11 subfamily.</text>
</comment>
<name>KA112_PARVI</name>
<evidence type="ECO:0000255" key="1">
    <source>
        <dbReference type="PROSITE-ProRule" id="PRU01209"/>
    </source>
</evidence>
<evidence type="ECO:0000269" key="2">
    <source>
    </source>
</evidence>
<evidence type="ECO:0000269" key="3">
    <source>
    </source>
</evidence>
<evidence type="ECO:0000303" key="4">
    <source>
    </source>
</evidence>
<evidence type="ECO:0000303" key="5">
    <source>
    </source>
</evidence>
<evidence type="ECO:0000305" key="6"/>
<protein>
    <recommendedName>
        <fullName evidence="4 5">Potassium channel toxin alpha-KTx 11.2</fullName>
    </recommendedName>
    <alternativeName>
        <fullName evidence="4 5">Parabutoxin-2</fullName>
        <shortName evidence="4 5">PBTx2</shortName>
    </alternativeName>
</protein>
<proteinExistence type="evidence at protein level"/>
<reference key="1">
    <citation type="journal article" date="1999" name="Trends Pharmacol. Sci.">
        <title>A unified nomenclature for short-chain peptides isolated from scorpion venoms: alpha-KTx molecular subfamilies.</title>
        <authorList>
            <person name="Tytgat J."/>
            <person name="Chandy K.G."/>
            <person name="Garcia M.L."/>
            <person name="Gutman G.A."/>
            <person name="Martin-Eauclaire M.-F."/>
            <person name="van der Walt J.J."/>
            <person name="Possani L.D."/>
        </authorList>
    </citation>
    <scope>PROTEIN SEQUENCE</scope>
    <scope>SUBCELLULAR LOCATION</scope>
    <scope>TISSUE SPECIFICITY</scope>
    <scope>REVIEW</scope>
    <scope>NOMENCLATURE</scope>
    <source>
        <tissue>Venom</tissue>
    </source>
</reference>
<reference key="2">
    <citation type="journal article" date="2004" name="J. Biol. Chem.">
        <title>A subfamily of acidic alpha-K(+) toxins.</title>
        <authorList>
            <person name="Huys I."/>
            <person name="Olamendi-Portugal T."/>
            <person name="Garcia-Gomez B.I."/>
            <person name="Vandenberghe I."/>
            <person name="Van Beeumen J."/>
            <person name="Dyason K."/>
            <person name="Clynen E."/>
            <person name="Zhu S."/>
            <person name="van der Walt J."/>
            <person name="Possani L.D."/>
            <person name="Tytgat J."/>
        </authorList>
    </citation>
    <scope>FUNCTION</scope>
</reference>